<reference key="1">
    <citation type="journal article" date="1996" name="J. Biol. Chem.">
        <title>Characterization of a vacuolar protease in Neurospora crassa and the use of gene RIPing to generate protease-deficient strains.</title>
        <authorList>
            <person name="Vazquez-Laslop N."/>
            <person name="Tenney K."/>
            <person name="Bowman B.J."/>
        </authorList>
    </citation>
    <scope>NUCLEOTIDE SEQUENCE [GENOMIC DNA]</scope>
</reference>
<reference key="2">
    <citation type="journal article" date="2003" name="Nucleic Acids Res.">
        <title>What's in the genome of a filamentous fungus? Analysis of the Neurospora genome sequence.</title>
        <authorList>
            <person name="Mannhaupt G."/>
            <person name="Montrone C."/>
            <person name="Haase D."/>
            <person name="Mewes H.-W."/>
            <person name="Aign V."/>
            <person name="Hoheisel J.D."/>
            <person name="Fartmann B."/>
            <person name="Nyakatura G."/>
            <person name="Kempken F."/>
            <person name="Maier J."/>
            <person name="Schulte U."/>
        </authorList>
    </citation>
    <scope>NUCLEOTIDE SEQUENCE [LARGE SCALE GENOMIC DNA]</scope>
    <source>
        <strain>ATCC 24698 / 74-OR23-1A / CBS 708.71 / DSM 1257 / FGSC 987</strain>
    </source>
</reference>
<reference key="3">
    <citation type="journal article" date="2003" name="Nature">
        <title>The genome sequence of the filamentous fungus Neurospora crassa.</title>
        <authorList>
            <person name="Galagan J.E."/>
            <person name="Calvo S.E."/>
            <person name="Borkovich K.A."/>
            <person name="Selker E.U."/>
            <person name="Read N.D."/>
            <person name="Jaffe D.B."/>
            <person name="FitzHugh W."/>
            <person name="Ma L.-J."/>
            <person name="Smirnov S."/>
            <person name="Purcell S."/>
            <person name="Rehman B."/>
            <person name="Elkins T."/>
            <person name="Engels R."/>
            <person name="Wang S."/>
            <person name="Nielsen C.B."/>
            <person name="Butler J."/>
            <person name="Endrizzi M."/>
            <person name="Qui D."/>
            <person name="Ianakiev P."/>
            <person name="Bell-Pedersen D."/>
            <person name="Nelson M.A."/>
            <person name="Werner-Washburne M."/>
            <person name="Selitrennikoff C.P."/>
            <person name="Kinsey J.A."/>
            <person name="Braun E.L."/>
            <person name="Zelter A."/>
            <person name="Schulte U."/>
            <person name="Kothe G.O."/>
            <person name="Jedd G."/>
            <person name="Mewes H.-W."/>
            <person name="Staben C."/>
            <person name="Marcotte E."/>
            <person name="Greenberg D."/>
            <person name="Roy A."/>
            <person name="Foley K."/>
            <person name="Naylor J."/>
            <person name="Stange-Thomann N."/>
            <person name="Barrett R."/>
            <person name="Gnerre S."/>
            <person name="Kamal M."/>
            <person name="Kamvysselis M."/>
            <person name="Mauceli E.W."/>
            <person name="Bielke C."/>
            <person name="Rudd S."/>
            <person name="Frishman D."/>
            <person name="Krystofova S."/>
            <person name="Rasmussen C."/>
            <person name="Metzenberg R.L."/>
            <person name="Perkins D.D."/>
            <person name="Kroken S."/>
            <person name="Cogoni C."/>
            <person name="Macino G."/>
            <person name="Catcheside D.E.A."/>
            <person name="Li W."/>
            <person name="Pratt R.J."/>
            <person name="Osmani S.A."/>
            <person name="DeSouza C.P.C."/>
            <person name="Glass N.L."/>
            <person name="Orbach M.J."/>
            <person name="Berglund J.A."/>
            <person name="Voelker R."/>
            <person name="Yarden O."/>
            <person name="Plamann M."/>
            <person name="Seiler S."/>
            <person name="Dunlap J.C."/>
            <person name="Radford A."/>
            <person name="Aramayo R."/>
            <person name="Natvig D.O."/>
            <person name="Alex L.A."/>
            <person name="Mannhaupt G."/>
            <person name="Ebbole D.J."/>
            <person name="Freitag M."/>
            <person name="Paulsen I."/>
            <person name="Sachs M.S."/>
            <person name="Lander E.S."/>
            <person name="Nusbaum C."/>
            <person name="Birren B.W."/>
        </authorList>
    </citation>
    <scope>NUCLEOTIDE SEQUENCE [LARGE SCALE GENOMIC DNA]</scope>
    <source>
        <strain>ATCC 24698 / 74-OR23-1A / CBS 708.71 / DSM 1257 / FGSC 987</strain>
    </source>
</reference>
<comment type="subcellular location">
    <subcellularLocation>
        <location>Vacuole</location>
    </subcellularLocation>
    <text evidence="5">Lysosome-like vacuoles.</text>
</comment>
<comment type="similarity">
    <text evidence="5">Belongs to the peptidase A1 family.</text>
</comment>
<dbReference type="EC" id="3.4.23.-"/>
<dbReference type="EMBL" id="U36471">
    <property type="protein sequence ID" value="AAA79878.1"/>
    <property type="molecule type" value="Genomic_DNA"/>
</dbReference>
<dbReference type="EMBL" id="BX908789">
    <property type="protein sequence ID" value="CAF05874.1"/>
    <property type="molecule type" value="Genomic_DNA"/>
</dbReference>
<dbReference type="EMBL" id="CM002242">
    <property type="protein sequence ID" value="EAA30681.1"/>
    <property type="molecule type" value="Genomic_DNA"/>
</dbReference>
<dbReference type="PIR" id="T47207">
    <property type="entry name" value="T47207"/>
</dbReference>
<dbReference type="SMR" id="Q01294"/>
<dbReference type="FunCoup" id="Q01294">
    <property type="interactions" value="380"/>
</dbReference>
<dbReference type="STRING" id="367110.Q01294"/>
<dbReference type="MEROPS" id="A01.018"/>
<dbReference type="GlyCosmos" id="Q01294">
    <property type="glycosylation" value="2 sites, No reported glycans"/>
</dbReference>
<dbReference type="PaxDb" id="5141-EFNCRP00000003251"/>
<dbReference type="EnsemblFungi" id="EAA30681">
    <property type="protein sequence ID" value="EAA30681"/>
    <property type="gene ID" value="NCU02273"/>
</dbReference>
<dbReference type="KEGG" id="ncr:NCU02273"/>
<dbReference type="VEuPathDB" id="FungiDB:NCU02273"/>
<dbReference type="HOGENOM" id="CLU_013253_3_4_1"/>
<dbReference type="InParanoid" id="Q01294"/>
<dbReference type="OMA" id="KYDHDAS"/>
<dbReference type="OrthoDB" id="771136at2759"/>
<dbReference type="Proteomes" id="UP000001805">
    <property type="component" value="Chromosome 7, Linkage Group VII"/>
</dbReference>
<dbReference type="GO" id="GO:0000324">
    <property type="term" value="C:fungal-type vacuole"/>
    <property type="evidence" value="ECO:0000318"/>
    <property type="project" value="GO_Central"/>
</dbReference>
<dbReference type="GO" id="GO:0004190">
    <property type="term" value="F:aspartic-type endopeptidase activity"/>
    <property type="evidence" value="ECO:0000318"/>
    <property type="project" value="GO_Central"/>
</dbReference>
<dbReference type="GO" id="GO:0006508">
    <property type="term" value="P:proteolysis"/>
    <property type="evidence" value="ECO:0000318"/>
    <property type="project" value="GO_Central"/>
</dbReference>
<dbReference type="CDD" id="cd05488">
    <property type="entry name" value="Proteinase_A_fungi"/>
    <property type="match status" value="1"/>
</dbReference>
<dbReference type="FunFam" id="2.40.70.10:FF:000036">
    <property type="entry name" value="Vacuolar aspartic protease"/>
    <property type="match status" value="1"/>
</dbReference>
<dbReference type="FunFam" id="2.40.70.10:FF:000002">
    <property type="entry name" value="Vacuolar aspartic proteinase"/>
    <property type="match status" value="1"/>
</dbReference>
<dbReference type="Gene3D" id="2.40.70.10">
    <property type="entry name" value="Acid Proteases"/>
    <property type="match status" value="2"/>
</dbReference>
<dbReference type="InterPro" id="IPR001461">
    <property type="entry name" value="Aspartic_peptidase_A1"/>
</dbReference>
<dbReference type="InterPro" id="IPR001969">
    <property type="entry name" value="Aspartic_peptidase_AS"/>
</dbReference>
<dbReference type="InterPro" id="IPR033121">
    <property type="entry name" value="PEPTIDASE_A1"/>
</dbReference>
<dbReference type="InterPro" id="IPR021109">
    <property type="entry name" value="Peptidase_aspartic_dom_sf"/>
</dbReference>
<dbReference type="InterPro" id="IPR033819">
    <property type="entry name" value="Saccharopepsin"/>
</dbReference>
<dbReference type="PANTHER" id="PTHR47966">
    <property type="entry name" value="BETA-SITE APP-CLEAVING ENZYME, ISOFORM A-RELATED"/>
    <property type="match status" value="1"/>
</dbReference>
<dbReference type="PANTHER" id="PTHR47966:SF51">
    <property type="entry name" value="BETA-SITE APP-CLEAVING ENZYME, ISOFORM A-RELATED"/>
    <property type="match status" value="1"/>
</dbReference>
<dbReference type="Pfam" id="PF00026">
    <property type="entry name" value="Asp"/>
    <property type="match status" value="1"/>
</dbReference>
<dbReference type="PRINTS" id="PR00792">
    <property type="entry name" value="PEPSIN"/>
</dbReference>
<dbReference type="SUPFAM" id="SSF50630">
    <property type="entry name" value="Acid proteases"/>
    <property type="match status" value="1"/>
</dbReference>
<dbReference type="PROSITE" id="PS00141">
    <property type="entry name" value="ASP_PROTEASE"/>
    <property type="match status" value="2"/>
</dbReference>
<dbReference type="PROSITE" id="PS51767">
    <property type="entry name" value="PEPTIDASE_A1"/>
    <property type="match status" value="1"/>
</dbReference>
<keyword id="KW-0064">Aspartyl protease</keyword>
<keyword id="KW-1015">Disulfide bond</keyword>
<keyword id="KW-0325">Glycoprotein</keyword>
<keyword id="KW-0378">Hydrolase</keyword>
<keyword id="KW-0645">Protease</keyword>
<keyword id="KW-1185">Reference proteome</keyword>
<keyword id="KW-0732">Signal</keyword>
<keyword id="KW-0926">Vacuole</keyword>
<keyword id="KW-0865">Zymogen</keyword>
<organism>
    <name type="scientific">Neurospora crassa (strain ATCC 24698 / 74-OR23-1A / CBS 708.71 / DSM 1257 / FGSC 987)</name>
    <dbReference type="NCBI Taxonomy" id="367110"/>
    <lineage>
        <taxon>Eukaryota</taxon>
        <taxon>Fungi</taxon>
        <taxon>Dikarya</taxon>
        <taxon>Ascomycota</taxon>
        <taxon>Pezizomycotina</taxon>
        <taxon>Sordariomycetes</taxon>
        <taxon>Sordariomycetidae</taxon>
        <taxon>Sordariales</taxon>
        <taxon>Sordariaceae</taxon>
        <taxon>Neurospora</taxon>
    </lineage>
</organism>
<sequence length="396" mass="42933">MKGALLTAAMLLGSAQAGVHTMKLKKVPLAEQLESVPIDVQVQHLGQKYTGLRTESHTQAMFKATDAQVSGNHPVPITNFMNAQYFSEITIGTPPQTFKVVLDTGSSNLWVPSSQCGSIACYLHNKYESSESSTYKKNGTSFKIEYGSGSLSGFVSQDRMTIGDITINDQLFAEATSEPGLAFAFGRFDGILGLGYDRIAVNGITPPFYKMVEQKLVDEPVFSFYLADQDGESEVVFGGVNKDRYTGKITTIPLRRKAYWEVDFDAIGYGKDFAELEGHGVILDTGTSLIALPSQLAEMLNAQIGAKKSWNGQFTIDCGKKSSLEDVTFTLAGYNFTLGPEDYILEASGSCLSTFMGMDMPAPVGPLAILGDAFLRKYYSIYDLGADTVGIATAKR</sequence>
<accession>Q01294</accession>
<accession>Q7RVB0</accession>
<gene>
    <name type="primary">pep-4</name>
    <name type="ORF">B13D24.090</name>
    <name type="ORF">NCU02273</name>
</gene>
<evidence type="ECO:0000250" key="1"/>
<evidence type="ECO:0000255" key="2"/>
<evidence type="ECO:0000255" key="3">
    <source>
        <dbReference type="PROSITE-ProRule" id="PRU01103"/>
    </source>
</evidence>
<evidence type="ECO:0000255" key="4">
    <source>
        <dbReference type="PROSITE-ProRule" id="PRU10094"/>
    </source>
</evidence>
<evidence type="ECO:0000305" key="5"/>
<proteinExistence type="inferred from homology"/>
<protein>
    <recommendedName>
        <fullName>Vacuolar protease A</fullName>
        <ecNumber>3.4.23.-</ecNumber>
    </recommendedName>
</protein>
<name>CARP_NEUCR</name>
<feature type="signal peptide" evidence="2">
    <location>
        <begin position="1"/>
        <end position="17"/>
    </location>
</feature>
<feature type="propeptide" id="PRO_0000025875" description="Activation peptide">
    <location>
        <begin position="18"/>
        <end position="70"/>
    </location>
</feature>
<feature type="chain" id="PRO_0000025876" description="Vacuolar protease A">
    <location>
        <begin position="71"/>
        <end position="396"/>
    </location>
</feature>
<feature type="domain" description="Peptidase A1" evidence="3">
    <location>
        <begin position="85"/>
        <end position="392"/>
    </location>
</feature>
<feature type="active site" evidence="4">
    <location>
        <position position="103"/>
    </location>
</feature>
<feature type="active site" evidence="4">
    <location>
        <position position="284"/>
    </location>
</feature>
<feature type="glycosylation site" description="N-linked (GlcNAc...) asparagine" evidence="2">
    <location>
        <position position="138"/>
    </location>
</feature>
<feature type="glycosylation site" description="N-linked (GlcNAc...) asparagine" evidence="2">
    <location>
        <position position="335"/>
    </location>
</feature>
<feature type="disulfide bond" evidence="1">
    <location>
        <begin position="116"/>
        <end position="121"/>
    </location>
</feature>
<feature type="disulfide bond" evidence="1">
    <location>
        <begin position="318"/>
        <end position="351"/>
    </location>
</feature>
<feature type="sequence conflict" description="In Ref. 1; AAA79878." evidence="5" ref="1">
    <original>EQ</original>
    <variation>DE</variation>
    <location>
        <begin position="31"/>
        <end position="32"/>
    </location>
</feature>
<feature type="sequence conflict" description="In Ref. 1; AAA79878." evidence="5" ref="1">
    <original>I</original>
    <variation>L</variation>
    <location>
        <position position="199"/>
    </location>
</feature>
<feature type="sequence conflict" description="In Ref. 1; AAA79878." evidence="5" ref="1">
    <original>N</original>
    <variation>P</variation>
    <location>
        <position position="202"/>
    </location>
</feature>